<proteinExistence type="inferred from homology"/>
<dbReference type="EMBL" id="CP000753">
    <property type="protein sequence ID" value="ABS07492.1"/>
    <property type="molecule type" value="Genomic_DNA"/>
</dbReference>
<dbReference type="RefSeq" id="WP_006080881.1">
    <property type="nucleotide sequence ID" value="NC_009665.1"/>
</dbReference>
<dbReference type="SMR" id="A6WL03"/>
<dbReference type="GeneID" id="11771635"/>
<dbReference type="KEGG" id="sbm:Shew185_1342"/>
<dbReference type="HOGENOM" id="CLU_057217_6_0_6"/>
<dbReference type="GO" id="GO:0005829">
    <property type="term" value="C:cytosol"/>
    <property type="evidence" value="ECO:0007669"/>
    <property type="project" value="TreeGrafter"/>
</dbReference>
<dbReference type="GO" id="GO:0000774">
    <property type="term" value="F:adenyl-nucleotide exchange factor activity"/>
    <property type="evidence" value="ECO:0007669"/>
    <property type="project" value="InterPro"/>
</dbReference>
<dbReference type="GO" id="GO:0042803">
    <property type="term" value="F:protein homodimerization activity"/>
    <property type="evidence" value="ECO:0007669"/>
    <property type="project" value="InterPro"/>
</dbReference>
<dbReference type="GO" id="GO:0051087">
    <property type="term" value="F:protein-folding chaperone binding"/>
    <property type="evidence" value="ECO:0007669"/>
    <property type="project" value="InterPro"/>
</dbReference>
<dbReference type="GO" id="GO:0051082">
    <property type="term" value="F:unfolded protein binding"/>
    <property type="evidence" value="ECO:0007669"/>
    <property type="project" value="TreeGrafter"/>
</dbReference>
<dbReference type="GO" id="GO:0006457">
    <property type="term" value="P:protein folding"/>
    <property type="evidence" value="ECO:0007669"/>
    <property type="project" value="InterPro"/>
</dbReference>
<dbReference type="CDD" id="cd00446">
    <property type="entry name" value="GrpE"/>
    <property type="match status" value="1"/>
</dbReference>
<dbReference type="FunFam" id="2.30.22.10:FF:000001">
    <property type="entry name" value="Protein GrpE"/>
    <property type="match status" value="1"/>
</dbReference>
<dbReference type="Gene3D" id="3.90.20.20">
    <property type="match status" value="1"/>
</dbReference>
<dbReference type="Gene3D" id="2.30.22.10">
    <property type="entry name" value="Head domain of nucleotide exchange factor GrpE"/>
    <property type="match status" value="1"/>
</dbReference>
<dbReference type="HAMAP" id="MF_01151">
    <property type="entry name" value="GrpE"/>
    <property type="match status" value="1"/>
</dbReference>
<dbReference type="InterPro" id="IPR000740">
    <property type="entry name" value="GrpE"/>
</dbReference>
<dbReference type="InterPro" id="IPR013805">
    <property type="entry name" value="GrpE_coiled_coil"/>
</dbReference>
<dbReference type="InterPro" id="IPR009012">
    <property type="entry name" value="GrpE_head"/>
</dbReference>
<dbReference type="NCBIfam" id="NF010737">
    <property type="entry name" value="PRK14139.1"/>
    <property type="match status" value="1"/>
</dbReference>
<dbReference type="NCBIfam" id="NF010738">
    <property type="entry name" value="PRK14140.1"/>
    <property type="match status" value="1"/>
</dbReference>
<dbReference type="NCBIfam" id="NF010748">
    <property type="entry name" value="PRK14150.1"/>
    <property type="match status" value="1"/>
</dbReference>
<dbReference type="PANTHER" id="PTHR21237">
    <property type="entry name" value="GRPE PROTEIN"/>
    <property type="match status" value="1"/>
</dbReference>
<dbReference type="PANTHER" id="PTHR21237:SF23">
    <property type="entry name" value="GRPE PROTEIN HOMOLOG, MITOCHONDRIAL"/>
    <property type="match status" value="1"/>
</dbReference>
<dbReference type="Pfam" id="PF01025">
    <property type="entry name" value="GrpE"/>
    <property type="match status" value="1"/>
</dbReference>
<dbReference type="PRINTS" id="PR00773">
    <property type="entry name" value="GRPEPROTEIN"/>
</dbReference>
<dbReference type="SUPFAM" id="SSF58014">
    <property type="entry name" value="Coiled-coil domain of nucleotide exchange factor GrpE"/>
    <property type="match status" value="1"/>
</dbReference>
<dbReference type="SUPFAM" id="SSF51064">
    <property type="entry name" value="Head domain of nucleotide exchange factor GrpE"/>
    <property type="match status" value="1"/>
</dbReference>
<dbReference type="PROSITE" id="PS01071">
    <property type="entry name" value="GRPE"/>
    <property type="match status" value="1"/>
</dbReference>
<feature type="chain" id="PRO_1000137617" description="Protein GrpE">
    <location>
        <begin position="1"/>
        <end position="206"/>
    </location>
</feature>
<comment type="function">
    <text evidence="1">Participates actively in the response to hyperosmotic and heat shock by preventing the aggregation of stress-denatured proteins, in association with DnaK and GrpE. It is the nucleotide exchange factor for DnaK and may function as a thermosensor. Unfolded proteins bind initially to DnaJ; upon interaction with the DnaJ-bound protein, DnaK hydrolyzes its bound ATP, resulting in the formation of a stable complex. GrpE releases ADP from DnaK; ATP binding to DnaK triggers the release of the substrate protein, thus completing the reaction cycle. Several rounds of ATP-dependent interactions between DnaJ, DnaK and GrpE are required for fully efficient folding.</text>
</comment>
<comment type="subunit">
    <text evidence="1">Homodimer.</text>
</comment>
<comment type="subcellular location">
    <subcellularLocation>
        <location evidence="1">Cytoplasm</location>
    </subcellularLocation>
</comment>
<comment type="similarity">
    <text evidence="1">Belongs to the GrpE family.</text>
</comment>
<gene>
    <name evidence="1" type="primary">grpE</name>
    <name type="ordered locus">Shew185_1342</name>
</gene>
<sequence length="206" mass="22680">MSNESIKAEQDLIQEGVESEVSTAEASLIDELTQANFRIEELEQLLAEALAKVEEQKDSVIRAAAEVDNIRRRAAMDVEKANKFALEKFANELLPVLDNMERALMGTNPEDEATKSIYQGVELTQKSLLTAVAKFGVKQIDPQGQSFNPDQHQAIGMQPSAEFPANTVMLVMQKGYELNSRLLRPAMVMVSQGGPNQESATIDIEA</sequence>
<organism>
    <name type="scientific">Shewanella baltica (strain OS185)</name>
    <dbReference type="NCBI Taxonomy" id="402882"/>
    <lineage>
        <taxon>Bacteria</taxon>
        <taxon>Pseudomonadati</taxon>
        <taxon>Pseudomonadota</taxon>
        <taxon>Gammaproteobacteria</taxon>
        <taxon>Alteromonadales</taxon>
        <taxon>Shewanellaceae</taxon>
        <taxon>Shewanella</taxon>
    </lineage>
</organism>
<name>GRPE_SHEB8</name>
<keyword id="KW-0143">Chaperone</keyword>
<keyword id="KW-0963">Cytoplasm</keyword>
<keyword id="KW-0346">Stress response</keyword>
<protein>
    <recommendedName>
        <fullName evidence="1">Protein GrpE</fullName>
    </recommendedName>
    <alternativeName>
        <fullName evidence="1">HSP-70 cofactor</fullName>
    </alternativeName>
</protein>
<reference key="1">
    <citation type="submission" date="2007-07" db="EMBL/GenBank/DDBJ databases">
        <title>Complete sequence of chromosome of Shewanella baltica OS185.</title>
        <authorList>
            <consortium name="US DOE Joint Genome Institute"/>
            <person name="Copeland A."/>
            <person name="Lucas S."/>
            <person name="Lapidus A."/>
            <person name="Barry K."/>
            <person name="Glavina del Rio T."/>
            <person name="Dalin E."/>
            <person name="Tice H."/>
            <person name="Pitluck S."/>
            <person name="Sims D."/>
            <person name="Brettin T."/>
            <person name="Bruce D."/>
            <person name="Detter J.C."/>
            <person name="Han C."/>
            <person name="Schmutz J."/>
            <person name="Larimer F."/>
            <person name="Land M."/>
            <person name="Hauser L."/>
            <person name="Kyrpides N."/>
            <person name="Mikhailova N."/>
            <person name="Brettar I."/>
            <person name="Rodrigues J."/>
            <person name="Konstantinidis K."/>
            <person name="Tiedje J."/>
            <person name="Richardson P."/>
        </authorList>
    </citation>
    <scope>NUCLEOTIDE SEQUENCE [LARGE SCALE GENOMIC DNA]</scope>
    <source>
        <strain>OS185</strain>
    </source>
</reference>
<evidence type="ECO:0000255" key="1">
    <source>
        <dbReference type="HAMAP-Rule" id="MF_01151"/>
    </source>
</evidence>
<accession>A6WL03</accession>